<protein>
    <recommendedName>
        <fullName>Cytochrome b</fullName>
    </recommendedName>
    <alternativeName>
        <fullName>Complex III subunit 3</fullName>
    </alternativeName>
    <alternativeName>
        <fullName>Complex III subunit III</fullName>
    </alternativeName>
    <alternativeName>
        <fullName>Cytochrome b-c1 complex subunit 3</fullName>
    </alternativeName>
    <alternativeName>
        <fullName>Ubiquinol-cytochrome-c reductase complex cytochrome b subunit</fullName>
    </alternativeName>
</protein>
<proteinExistence type="inferred from homology"/>
<name>CYB_AOTAI</name>
<dbReference type="EMBL" id="DQ098867">
    <property type="protein sequence ID" value="ABA53812.1"/>
    <property type="molecule type" value="Genomic_DNA"/>
</dbReference>
<dbReference type="EMBL" id="DQ098868">
    <property type="protein sequence ID" value="ABA53813.1"/>
    <property type="molecule type" value="Genomic_DNA"/>
</dbReference>
<dbReference type="GO" id="GO:0005743">
    <property type="term" value="C:mitochondrial inner membrane"/>
    <property type="evidence" value="ECO:0007669"/>
    <property type="project" value="UniProtKB-SubCell"/>
</dbReference>
<dbReference type="GO" id="GO:0045275">
    <property type="term" value="C:respiratory chain complex III"/>
    <property type="evidence" value="ECO:0007669"/>
    <property type="project" value="InterPro"/>
</dbReference>
<dbReference type="GO" id="GO:0046872">
    <property type="term" value="F:metal ion binding"/>
    <property type="evidence" value="ECO:0007669"/>
    <property type="project" value="UniProtKB-KW"/>
</dbReference>
<dbReference type="GO" id="GO:0008121">
    <property type="term" value="F:ubiquinol-cytochrome-c reductase activity"/>
    <property type="evidence" value="ECO:0007669"/>
    <property type="project" value="InterPro"/>
</dbReference>
<dbReference type="GO" id="GO:0006122">
    <property type="term" value="P:mitochondrial electron transport, ubiquinol to cytochrome c"/>
    <property type="evidence" value="ECO:0007669"/>
    <property type="project" value="TreeGrafter"/>
</dbReference>
<dbReference type="CDD" id="cd00290">
    <property type="entry name" value="cytochrome_b_C"/>
    <property type="match status" value="1"/>
</dbReference>
<dbReference type="CDD" id="cd00284">
    <property type="entry name" value="Cytochrome_b_N"/>
    <property type="match status" value="1"/>
</dbReference>
<dbReference type="FunFam" id="1.20.810.10:FF:000002">
    <property type="entry name" value="Cytochrome b"/>
    <property type="match status" value="1"/>
</dbReference>
<dbReference type="Gene3D" id="1.20.810.10">
    <property type="entry name" value="Cytochrome Bc1 Complex, Chain C"/>
    <property type="match status" value="1"/>
</dbReference>
<dbReference type="InterPro" id="IPR005798">
    <property type="entry name" value="Cyt_b/b6_C"/>
</dbReference>
<dbReference type="InterPro" id="IPR036150">
    <property type="entry name" value="Cyt_b/b6_C_sf"/>
</dbReference>
<dbReference type="InterPro" id="IPR005797">
    <property type="entry name" value="Cyt_b/b6_N"/>
</dbReference>
<dbReference type="InterPro" id="IPR027387">
    <property type="entry name" value="Cytb/b6-like_sf"/>
</dbReference>
<dbReference type="InterPro" id="IPR030689">
    <property type="entry name" value="Cytochrome_b"/>
</dbReference>
<dbReference type="InterPro" id="IPR048260">
    <property type="entry name" value="Cytochrome_b_C_euk/bac"/>
</dbReference>
<dbReference type="InterPro" id="IPR048259">
    <property type="entry name" value="Cytochrome_b_N_euk/bac"/>
</dbReference>
<dbReference type="InterPro" id="IPR016174">
    <property type="entry name" value="Di-haem_cyt_TM"/>
</dbReference>
<dbReference type="PANTHER" id="PTHR19271">
    <property type="entry name" value="CYTOCHROME B"/>
    <property type="match status" value="1"/>
</dbReference>
<dbReference type="PANTHER" id="PTHR19271:SF16">
    <property type="entry name" value="CYTOCHROME B"/>
    <property type="match status" value="1"/>
</dbReference>
<dbReference type="Pfam" id="PF00032">
    <property type="entry name" value="Cytochrom_B_C"/>
    <property type="match status" value="1"/>
</dbReference>
<dbReference type="Pfam" id="PF00033">
    <property type="entry name" value="Cytochrome_B"/>
    <property type="match status" value="1"/>
</dbReference>
<dbReference type="PIRSF" id="PIRSF038885">
    <property type="entry name" value="COB"/>
    <property type="match status" value="1"/>
</dbReference>
<dbReference type="SUPFAM" id="SSF81648">
    <property type="entry name" value="a domain/subunit of cytochrome bc1 complex (Ubiquinol-cytochrome c reductase)"/>
    <property type="match status" value="1"/>
</dbReference>
<dbReference type="SUPFAM" id="SSF81342">
    <property type="entry name" value="Transmembrane di-heme cytochromes"/>
    <property type="match status" value="1"/>
</dbReference>
<dbReference type="PROSITE" id="PS51003">
    <property type="entry name" value="CYTB_CTER"/>
    <property type="match status" value="1"/>
</dbReference>
<dbReference type="PROSITE" id="PS51002">
    <property type="entry name" value="CYTB_NTER"/>
    <property type="match status" value="1"/>
</dbReference>
<comment type="function">
    <text evidence="2">Component of the ubiquinol-cytochrome c reductase complex (complex III or cytochrome b-c1 complex) that is part of the mitochondrial respiratory chain. The b-c1 complex mediates electron transfer from ubiquinol to cytochrome c. Contributes to the generation of a proton gradient across the mitochondrial membrane that is then used for ATP synthesis.</text>
</comment>
<comment type="cofactor">
    <cofactor evidence="2">
        <name>heme b</name>
        <dbReference type="ChEBI" id="CHEBI:60344"/>
    </cofactor>
    <text evidence="2">Binds 2 heme b groups non-covalently.</text>
</comment>
<comment type="subunit">
    <text evidence="2">The cytochrome bc1 complex contains 11 subunits: 3 respiratory subunits (MT-CYB, CYC1 and UQCRFS1), 2 core proteins (UQCRC1 and UQCRC2) and 6 low-molecular weight proteins (UQCRH/QCR6, UQCRB/QCR7, UQCRQ/QCR8, UQCR10/QCR9, UQCR11/QCR10 and a cleavage product of UQCRFS1). This cytochrome bc1 complex then forms a dimer.</text>
</comment>
<comment type="subcellular location">
    <subcellularLocation>
        <location evidence="2">Mitochondrion inner membrane</location>
        <topology evidence="2">Multi-pass membrane protein</topology>
    </subcellularLocation>
</comment>
<comment type="miscellaneous">
    <text evidence="1">Heme 1 (or BL or b562) is low-potential and absorbs at about 562 nm, and heme 2 (or BH or b566) is high-potential and absorbs at about 566 nm.</text>
</comment>
<comment type="similarity">
    <text evidence="3 4">Belongs to the cytochrome b family.</text>
</comment>
<comment type="caution">
    <text evidence="2">The full-length protein contains only eight transmembrane helices, not nine as predicted by bioinformatics tools.</text>
</comment>
<keyword id="KW-0249">Electron transport</keyword>
<keyword id="KW-0349">Heme</keyword>
<keyword id="KW-0408">Iron</keyword>
<keyword id="KW-0472">Membrane</keyword>
<keyword id="KW-0479">Metal-binding</keyword>
<keyword id="KW-0496">Mitochondrion</keyword>
<keyword id="KW-0999">Mitochondrion inner membrane</keyword>
<keyword id="KW-0679">Respiratory chain</keyword>
<keyword id="KW-0812">Transmembrane</keyword>
<keyword id="KW-1133">Transmembrane helix</keyword>
<keyword id="KW-0813">Transport</keyword>
<keyword id="KW-0830">Ubiquinone</keyword>
<sequence length="379" mass="42945">MTSPRKTHPLAKIINESFIDLPTPSNISSWWNFGSLLGICLIIQITTGLFLAMHYTPDTSTAFSSVAHITRDVNYGWMIRYMHANGASMFFVCLFLHIGRGLYYGSFLFLKTWNIGIILLLTTMATAFMGYVLPWGQMSFWGATVITNLLSAIPYIGSDLVQWXWGGFSVDKATLTRFFTFHFILPFIIAALATIHLLFLHETGSSNPSGMMSDPDKVMFHPYYTTKDILGLIFLLLSLMSLTLFMPDLLTDPDNYTLANPLNTPPHIKPEWYFLFAYAILRSIPNKLGGVLALVLSILILMVIPVLHFSKQQSMMFRPITQILFWALVADLLTLTWIGGQPVEYPFVTIGQTASIMYFFIIITLMPLFALIENKLFKW</sequence>
<reference key="1">
    <citation type="journal article" date="2005" name="J. Virol.">
        <title>Evolution of cyclophilin A and TRIMCyp retrotransposition in New World primates.</title>
        <authorList>
            <person name="Ribeiro I.P."/>
            <person name="Menezes A.N."/>
            <person name="Moreira M.A.M."/>
            <person name="Bonvicino C.R."/>
            <person name="Seuanez H.N."/>
            <person name="Soares M.A."/>
        </authorList>
    </citation>
    <scope>NUCLEOTIDE SEQUENCE [GENOMIC DNA]</scope>
    <source>
        <strain>Isolate 01</strain>
        <strain>Isolate 02</strain>
    </source>
</reference>
<gene>
    <name type="primary">MT-CYB</name>
    <name type="synonym">COB</name>
    <name type="synonym">CYTB</name>
    <name type="synonym">MTCYB</name>
</gene>
<accession>Q2Y067</accession>
<accession>Q2Y066</accession>
<feature type="chain" id="PRO_0000227750" description="Cytochrome b">
    <location>
        <begin position="1"/>
        <end position="379"/>
    </location>
</feature>
<feature type="transmembrane region" description="Helical" evidence="2">
    <location>
        <begin position="33"/>
        <end position="53"/>
    </location>
</feature>
<feature type="transmembrane region" description="Helical" evidence="2">
    <location>
        <begin position="77"/>
        <end position="98"/>
    </location>
</feature>
<feature type="transmembrane region" description="Helical" evidence="2">
    <location>
        <begin position="113"/>
        <end position="133"/>
    </location>
</feature>
<feature type="transmembrane region" description="Helical" evidence="2">
    <location>
        <begin position="178"/>
        <end position="198"/>
    </location>
</feature>
<feature type="transmembrane region" description="Helical" evidence="2">
    <location>
        <begin position="226"/>
        <end position="246"/>
    </location>
</feature>
<feature type="transmembrane region" description="Helical" evidence="2">
    <location>
        <begin position="288"/>
        <end position="308"/>
    </location>
</feature>
<feature type="transmembrane region" description="Helical" evidence="2">
    <location>
        <begin position="320"/>
        <end position="340"/>
    </location>
</feature>
<feature type="transmembrane region" description="Helical" evidence="2">
    <location>
        <begin position="347"/>
        <end position="367"/>
    </location>
</feature>
<feature type="binding site" description="axial binding residue" evidence="2">
    <location>
        <position position="83"/>
    </location>
    <ligand>
        <name>heme b</name>
        <dbReference type="ChEBI" id="CHEBI:60344"/>
        <label>b562</label>
    </ligand>
    <ligandPart>
        <name>Fe</name>
        <dbReference type="ChEBI" id="CHEBI:18248"/>
    </ligandPart>
</feature>
<feature type="binding site" description="axial binding residue" evidence="2">
    <location>
        <position position="97"/>
    </location>
    <ligand>
        <name>heme b</name>
        <dbReference type="ChEBI" id="CHEBI:60344"/>
        <label>b566</label>
    </ligand>
    <ligandPart>
        <name>Fe</name>
        <dbReference type="ChEBI" id="CHEBI:18248"/>
    </ligandPart>
</feature>
<feature type="binding site" description="axial binding residue" evidence="2">
    <location>
        <position position="182"/>
    </location>
    <ligand>
        <name>heme b</name>
        <dbReference type="ChEBI" id="CHEBI:60344"/>
        <label>b562</label>
    </ligand>
    <ligandPart>
        <name>Fe</name>
        <dbReference type="ChEBI" id="CHEBI:18248"/>
    </ligandPart>
</feature>
<feature type="binding site" description="axial binding residue" evidence="2">
    <location>
        <position position="196"/>
    </location>
    <ligand>
        <name>heme b</name>
        <dbReference type="ChEBI" id="CHEBI:60344"/>
        <label>b566</label>
    </ligand>
    <ligandPart>
        <name>Fe</name>
        <dbReference type="ChEBI" id="CHEBI:18248"/>
    </ligandPart>
</feature>
<feature type="binding site" evidence="2">
    <location>
        <position position="201"/>
    </location>
    <ligand>
        <name>a ubiquinone</name>
        <dbReference type="ChEBI" id="CHEBI:16389"/>
    </ligand>
</feature>
<feature type="sequence variant" description="In strain: Isolate 02.">
    <original>M</original>
    <variation>T</variation>
    <location>
        <position position="78"/>
    </location>
</feature>
<feature type="sequence variant" description="In strain: Isolate 02.">
    <original>VM</original>
    <variation>IT</variation>
    <location>
        <begin position="218"/>
        <end position="219"/>
    </location>
</feature>
<feature type="sequence variant" description="In strain: Isolate 02.">
    <original>T</original>
    <variation>A</variation>
    <location>
        <position position="226"/>
    </location>
</feature>
<feature type="sequence variant" description="In strain: Isolate 02.">
    <original>F</original>
    <variation>L</variation>
    <location>
        <position position="377"/>
    </location>
</feature>
<organism>
    <name type="scientific">Aotus azarai subsp. infulatus</name>
    <name type="common">Feline night monkey</name>
    <name type="synonym">Aotus infulatus</name>
    <dbReference type="NCBI Taxonomy" id="867331"/>
    <lineage>
        <taxon>Eukaryota</taxon>
        <taxon>Metazoa</taxon>
        <taxon>Chordata</taxon>
        <taxon>Craniata</taxon>
        <taxon>Vertebrata</taxon>
        <taxon>Euteleostomi</taxon>
        <taxon>Mammalia</taxon>
        <taxon>Eutheria</taxon>
        <taxon>Euarchontoglires</taxon>
        <taxon>Primates</taxon>
        <taxon>Haplorrhini</taxon>
        <taxon>Platyrrhini</taxon>
        <taxon>Aotidae</taxon>
        <taxon>Aotus</taxon>
    </lineage>
</organism>
<geneLocation type="mitochondrion"/>
<evidence type="ECO:0000250" key="1"/>
<evidence type="ECO:0000250" key="2">
    <source>
        <dbReference type="UniProtKB" id="P00157"/>
    </source>
</evidence>
<evidence type="ECO:0000255" key="3">
    <source>
        <dbReference type="PROSITE-ProRule" id="PRU00967"/>
    </source>
</evidence>
<evidence type="ECO:0000255" key="4">
    <source>
        <dbReference type="PROSITE-ProRule" id="PRU00968"/>
    </source>
</evidence>